<accession>A6UQL8</accession>
<gene>
    <name evidence="1" type="primary">bioD</name>
    <name type="ordered locus">Mevan_0885</name>
</gene>
<proteinExistence type="inferred from homology"/>
<sequence>MIFVTGTDTGIGKTYVSAILGKILKEKGINVGYMKPVESGGIEDTAYVRSELGLNNSFEELNPVNLKKPLSPNISAKIEEKEIDILKIKAAFEKLKEEYEFLIVEGAGGVAVPIKKDFLIADLIKYLDLTCIVVSRPNLGTINHTILTVDFLRKKGITVLGVIINCITDVSKVPYYEETFKSIEEFGNVEIIGIVNDKKDFYIDLKKLNLP</sequence>
<comment type="function">
    <text evidence="1">Catalyzes a mechanistically unusual reaction, the ATP-dependent insertion of CO2 between the N7 and N8 nitrogen atoms of 7,8-diaminopelargonic acid (DAPA, also called 7,8-diammoniononanoate) to form a ureido ring.</text>
</comment>
<comment type="catalytic activity">
    <reaction evidence="1">
        <text>(7R,8S)-7,8-diammoniononanoate + CO2 + ATP = (4R,5S)-dethiobiotin + ADP + phosphate + 3 H(+)</text>
        <dbReference type="Rhea" id="RHEA:15805"/>
        <dbReference type="ChEBI" id="CHEBI:15378"/>
        <dbReference type="ChEBI" id="CHEBI:16526"/>
        <dbReference type="ChEBI" id="CHEBI:30616"/>
        <dbReference type="ChEBI" id="CHEBI:43474"/>
        <dbReference type="ChEBI" id="CHEBI:149469"/>
        <dbReference type="ChEBI" id="CHEBI:149473"/>
        <dbReference type="ChEBI" id="CHEBI:456216"/>
        <dbReference type="EC" id="6.3.3.3"/>
    </reaction>
</comment>
<comment type="cofactor">
    <cofactor evidence="1">
        <name>Mg(2+)</name>
        <dbReference type="ChEBI" id="CHEBI:18420"/>
    </cofactor>
</comment>
<comment type="pathway">
    <text evidence="1">Cofactor biosynthesis; biotin biosynthesis; biotin from 7,8-diaminononanoate: step 1/2.</text>
</comment>
<comment type="subunit">
    <text evidence="1">Homodimer.</text>
</comment>
<comment type="subcellular location">
    <subcellularLocation>
        <location evidence="1">Cytoplasm</location>
    </subcellularLocation>
</comment>
<comment type="similarity">
    <text evidence="1">Belongs to the dethiobiotin synthetase family.</text>
</comment>
<feature type="chain" id="PRO_1000019564" description="ATP-dependent dethiobiotin synthetase BioD">
    <location>
        <begin position="1"/>
        <end position="211"/>
    </location>
</feature>
<feature type="active site" evidence="1">
    <location>
        <position position="35"/>
    </location>
</feature>
<feature type="binding site" evidence="1">
    <location>
        <begin position="10"/>
        <end position="15"/>
    </location>
    <ligand>
        <name>ATP</name>
        <dbReference type="ChEBI" id="CHEBI:30616"/>
    </ligand>
</feature>
<feature type="binding site" evidence="1">
    <location>
        <position position="14"/>
    </location>
    <ligand>
        <name>Mg(2+)</name>
        <dbReference type="ChEBI" id="CHEBI:18420"/>
    </ligand>
</feature>
<feature type="binding site" evidence="1">
    <location>
        <position position="39"/>
    </location>
    <ligand>
        <name>substrate</name>
    </ligand>
</feature>
<feature type="binding site" evidence="1">
    <location>
        <position position="44"/>
    </location>
    <ligand>
        <name>ATP</name>
        <dbReference type="ChEBI" id="CHEBI:30616"/>
    </ligand>
</feature>
<feature type="binding site" evidence="1">
    <location>
        <position position="44"/>
    </location>
    <ligand>
        <name>Mg(2+)</name>
        <dbReference type="ChEBI" id="CHEBI:18420"/>
    </ligand>
</feature>
<feature type="binding site" evidence="1">
    <location>
        <begin position="105"/>
        <end position="108"/>
    </location>
    <ligand>
        <name>ATP</name>
        <dbReference type="ChEBI" id="CHEBI:30616"/>
    </ligand>
</feature>
<feature type="binding site" evidence="1">
    <location>
        <position position="105"/>
    </location>
    <ligand>
        <name>Mg(2+)</name>
        <dbReference type="ChEBI" id="CHEBI:18420"/>
    </ligand>
</feature>
<feature type="binding site" evidence="1">
    <location>
        <begin position="165"/>
        <end position="166"/>
    </location>
    <ligand>
        <name>ATP</name>
        <dbReference type="ChEBI" id="CHEBI:30616"/>
    </ligand>
</feature>
<evidence type="ECO:0000255" key="1">
    <source>
        <dbReference type="HAMAP-Rule" id="MF_00336"/>
    </source>
</evidence>
<keyword id="KW-0067">ATP-binding</keyword>
<keyword id="KW-0093">Biotin biosynthesis</keyword>
<keyword id="KW-0963">Cytoplasm</keyword>
<keyword id="KW-0436">Ligase</keyword>
<keyword id="KW-0460">Magnesium</keyword>
<keyword id="KW-0479">Metal-binding</keyword>
<keyword id="KW-0547">Nucleotide-binding</keyword>
<organism>
    <name type="scientific">Methanococcus vannielii (strain ATCC 35089 / DSM 1224 / JCM 13029 / OCM 148 / SB)</name>
    <dbReference type="NCBI Taxonomy" id="406327"/>
    <lineage>
        <taxon>Archaea</taxon>
        <taxon>Methanobacteriati</taxon>
        <taxon>Methanobacteriota</taxon>
        <taxon>Methanomada group</taxon>
        <taxon>Methanococci</taxon>
        <taxon>Methanococcales</taxon>
        <taxon>Methanococcaceae</taxon>
        <taxon>Methanococcus</taxon>
    </lineage>
</organism>
<dbReference type="EC" id="6.3.3.3" evidence="1"/>
<dbReference type="EMBL" id="CP000742">
    <property type="protein sequence ID" value="ABR54790.1"/>
    <property type="molecule type" value="Genomic_DNA"/>
</dbReference>
<dbReference type="RefSeq" id="WP_011972691.1">
    <property type="nucleotide sequence ID" value="NC_009634.1"/>
</dbReference>
<dbReference type="SMR" id="A6UQL8"/>
<dbReference type="STRING" id="406327.Mevan_0885"/>
<dbReference type="GeneID" id="5326214"/>
<dbReference type="KEGG" id="mvn:Mevan_0885"/>
<dbReference type="eggNOG" id="arCOG00100">
    <property type="taxonomic scope" value="Archaea"/>
</dbReference>
<dbReference type="HOGENOM" id="CLU_072551_3_1_2"/>
<dbReference type="OrthoDB" id="50320at2157"/>
<dbReference type="UniPathway" id="UPA00078">
    <property type="reaction ID" value="UER00161"/>
</dbReference>
<dbReference type="Proteomes" id="UP000001107">
    <property type="component" value="Chromosome"/>
</dbReference>
<dbReference type="GO" id="GO:0005829">
    <property type="term" value="C:cytosol"/>
    <property type="evidence" value="ECO:0007669"/>
    <property type="project" value="TreeGrafter"/>
</dbReference>
<dbReference type="GO" id="GO:0005524">
    <property type="term" value="F:ATP binding"/>
    <property type="evidence" value="ECO:0007669"/>
    <property type="project" value="UniProtKB-UniRule"/>
</dbReference>
<dbReference type="GO" id="GO:0004141">
    <property type="term" value="F:dethiobiotin synthase activity"/>
    <property type="evidence" value="ECO:0007669"/>
    <property type="project" value="UniProtKB-UniRule"/>
</dbReference>
<dbReference type="GO" id="GO:0000287">
    <property type="term" value="F:magnesium ion binding"/>
    <property type="evidence" value="ECO:0007669"/>
    <property type="project" value="UniProtKB-UniRule"/>
</dbReference>
<dbReference type="GO" id="GO:0009102">
    <property type="term" value="P:biotin biosynthetic process"/>
    <property type="evidence" value="ECO:0007669"/>
    <property type="project" value="UniProtKB-UniRule"/>
</dbReference>
<dbReference type="CDD" id="cd03109">
    <property type="entry name" value="DTBS"/>
    <property type="match status" value="1"/>
</dbReference>
<dbReference type="FunFam" id="3.40.50.300:FF:000292">
    <property type="entry name" value="ATP-dependent dethiobiotin synthetase BioD"/>
    <property type="match status" value="1"/>
</dbReference>
<dbReference type="Gene3D" id="3.40.50.300">
    <property type="entry name" value="P-loop containing nucleotide triphosphate hydrolases"/>
    <property type="match status" value="1"/>
</dbReference>
<dbReference type="HAMAP" id="MF_00336">
    <property type="entry name" value="BioD"/>
    <property type="match status" value="1"/>
</dbReference>
<dbReference type="InterPro" id="IPR004472">
    <property type="entry name" value="DTB_synth_BioD"/>
</dbReference>
<dbReference type="InterPro" id="IPR027417">
    <property type="entry name" value="P-loop_NTPase"/>
</dbReference>
<dbReference type="NCBIfam" id="TIGR00347">
    <property type="entry name" value="bioD"/>
    <property type="match status" value="1"/>
</dbReference>
<dbReference type="PANTHER" id="PTHR43210">
    <property type="entry name" value="DETHIOBIOTIN SYNTHETASE"/>
    <property type="match status" value="1"/>
</dbReference>
<dbReference type="PANTHER" id="PTHR43210:SF5">
    <property type="entry name" value="DETHIOBIOTIN SYNTHETASE"/>
    <property type="match status" value="1"/>
</dbReference>
<dbReference type="Pfam" id="PF13500">
    <property type="entry name" value="AAA_26"/>
    <property type="match status" value="1"/>
</dbReference>
<dbReference type="PIRSF" id="PIRSF006755">
    <property type="entry name" value="DTB_synth"/>
    <property type="match status" value="1"/>
</dbReference>
<dbReference type="SUPFAM" id="SSF52540">
    <property type="entry name" value="P-loop containing nucleoside triphosphate hydrolases"/>
    <property type="match status" value="1"/>
</dbReference>
<protein>
    <recommendedName>
        <fullName evidence="1">ATP-dependent dethiobiotin synthetase BioD</fullName>
        <ecNumber evidence="1">6.3.3.3</ecNumber>
    </recommendedName>
    <alternativeName>
        <fullName evidence="1">DTB synthetase</fullName>
        <shortName evidence="1">DTBS</shortName>
    </alternativeName>
    <alternativeName>
        <fullName evidence="1">Dethiobiotin synthase</fullName>
    </alternativeName>
</protein>
<reference key="1">
    <citation type="submission" date="2007-06" db="EMBL/GenBank/DDBJ databases">
        <title>Complete sequence of Methanococcus vannielii SB.</title>
        <authorList>
            <consortium name="US DOE Joint Genome Institute"/>
            <person name="Copeland A."/>
            <person name="Lucas S."/>
            <person name="Lapidus A."/>
            <person name="Barry K."/>
            <person name="Glavina del Rio T."/>
            <person name="Dalin E."/>
            <person name="Tice H."/>
            <person name="Pitluck S."/>
            <person name="Chain P."/>
            <person name="Malfatti S."/>
            <person name="Shin M."/>
            <person name="Vergez L."/>
            <person name="Schmutz J."/>
            <person name="Larimer F."/>
            <person name="Land M."/>
            <person name="Hauser L."/>
            <person name="Kyrpides N."/>
            <person name="Anderson I."/>
            <person name="Sieprawska-Lupa M."/>
            <person name="Whitman W.B."/>
            <person name="Richardson P."/>
        </authorList>
    </citation>
    <scope>NUCLEOTIDE SEQUENCE [LARGE SCALE GENOMIC DNA]</scope>
    <source>
        <strain>ATCC 35089 / DSM 1224 / JCM 13029 / OCM 148 / SB</strain>
    </source>
</reference>
<name>BIOD_METVS</name>